<reference key="1">
    <citation type="submission" date="2007-03" db="EMBL/GenBank/DDBJ databases">
        <title>The NIAID influenza genome sequencing project.</title>
        <authorList>
            <person name="Ghedin E."/>
            <person name="Spiro D."/>
            <person name="Miller N."/>
            <person name="Zaborsky J."/>
            <person name="Feldblyum T."/>
            <person name="Subbu V."/>
            <person name="Shumway M."/>
            <person name="Sparenborg J."/>
            <person name="Groveman L."/>
            <person name="Halpin R."/>
            <person name="Sitz J."/>
            <person name="Koo H."/>
            <person name="Salzberg S.L."/>
            <person name="Webster R.G."/>
            <person name="Hoffmann E."/>
            <person name="Krauss S."/>
            <person name="Naeve C."/>
            <person name="Bao Y."/>
            <person name="Bolotov P."/>
            <person name="Dernovoy D."/>
            <person name="Kiryutin B."/>
            <person name="Lipman D.J."/>
            <person name="Tatusova T."/>
        </authorList>
    </citation>
    <scope>NUCLEOTIDE SEQUENCE [GENOMIC RNA]</scope>
</reference>
<reference key="2">
    <citation type="submission" date="2007-03" db="EMBL/GenBank/DDBJ databases">
        <authorList>
            <consortium name="The NIAID Influenza Genome Sequencing Consortium"/>
        </authorList>
    </citation>
    <scope>NUCLEOTIDE SEQUENCE [GENOMIC RNA]</scope>
</reference>
<proteinExistence type="inferred from homology"/>
<dbReference type="EMBL" id="CY020469">
    <property type="protein sequence ID" value="ABO38384.1"/>
    <property type="molecule type" value="Viral_cRNA"/>
</dbReference>
<dbReference type="SMR" id="A4GCL9"/>
<dbReference type="GlyCosmos" id="A4GCL9">
    <property type="glycosylation" value="7 sites, No reported glycans"/>
</dbReference>
<dbReference type="PRO" id="PR:A4GCL9"/>
<dbReference type="Proteomes" id="UP000000829">
    <property type="component" value="Genome"/>
</dbReference>
<dbReference type="GO" id="GO:0020002">
    <property type="term" value="C:host cell plasma membrane"/>
    <property type="evidence" value="ECO:0007669"/>
    <property type="project" value="UniProtKB-SubCell"/>
</dbReference>
<dbReference type="GO" id="GO:0016020">
    <property type="term" value="C:membrane"/>
    <property type="evidence" value="ECO:0007669"/>
    <property type="project" value="UniProtKB-UniRule"/>
</dbReference>
<dbReference type="GO" id="GO:0019031">
    <property type="term" value="C:viral envelope"/>
    <property type="evidence" value="ECO:0007669"/>
    <property type="project" value="UniProtKB-UniRule"/>
</dbReference>
<dbReference type="GO" id="GO:0055036">
    <property type="term" value="C:virion membrane"/>
    <property type="evidence" value="ECO:0007669"/>
    <property type="project" value="UniProtKB-SubCell"/>
</dbReference>
<dbReference type="GO" id="GO:0046789">
    <property type="term" value="F:host cell surface receptor binding"/>
    <property type="evidence" value="ECO:0007669"/>
    <property type="project" value="UniProtKB-UniRule"/>
</dbReference>
<dbReference type="GO" id="GO:0075512">
    <property type="term" value="P:clathrin-dependent endocytosis of virus by host cell"/>
    <property type="evidence" value="ECO:0007669"/>
    <property type="project" value="UniProtKB-UniRule"/>
</dbReference>
<dbReference type="GO" id="GO:0039654">
    <property type="term" value="P:fusion of virus membrane with host endosome membrane"/>
    <property type="evidence" value="ECO:0007669"/>
    <property type="project" value="UniProtKB-UniRule"/>
</dbReference>
<dbReference type="GO" id="GO:0019064">
    <property type="term" value="P:fusion of virus membrane with host plasma membrane"/>
    <property type="evidence" value="ECO:0007669"/>
    <property type="project" value="InterPro"/>
</dbReference>
<dbReference type="GO" id="GO:0046761">
    <property type="term" value="P:viral budding from plasma membrane"/>
    <property type="evidence" value="ECO:0007669"/>
    <property type="project" value="UniProtKB-UniRule"/>
</dbReference>
<dbReference type="GO" id="GO:0019062">
    <property type="term" value="P:virion attachment to host cell"/>
    <property type="evidence" value="ECO:0007669"/>
    <property type="project" value="UniProtKB-KW"/>
</dbReference>
<dbReference type="FunFam" id="3.90.20.10:FF:000002">
    <property type="entry name" value="Hemagglutinin"/>
    <property type="match status" value="1"/>
</dbReference>
<dbReference type="Gene3D" id="3.90.20.10">
    <property type="match status" value="1"/>
</dbReference>
<dbReference type="Gene3D" id="3.90.209.20">
    <property type="match status" value="1"/>
</dbReference>
<dbReference type="Gene3D" id="2.10.77.10">
    <property type="entry name" value="Hemagglutinin Chain A, Domain 2"/>
    <property type="match status" value="1"/>
</dbReference>
<dbReference type="HAMAP" id="MF_04072">
    <property type="entry name" value="INFV_HEMA"/>
    <property type="match status" value="1"/>
</dbReference>
<dbReference type="InterPro" id="IPR008980">
    <property type="entry name" value="Capsid_hemagglutn"/>
</dbReference>
<dbReference type="InterPro" id="IPR013828">
    <property type="entry name" value="Hemagglutn_HA1_a/b_dom_sf"/>
</dbReference>
<dbReference type="InterPro" id="IPR000149">
    <property type="entry name" value="Hemagglutn_influenz_A"/>
</dbReference>
<dbReference type="InterPro" id="IPR001364">
    <property type="entry name" value="Hemagglutn_influenz_A/B"/>
</dbReference>
<dbReference type="Pfam" id="PF00509">
    <property type="entry name" value="Hemagglutinin"/>
    <property type="match status" value="1"/>
</dbReference>
<dbReference type="PRINTS" id="PR00330">
    <property type="entry name" value="HEMAGGLUTN1"/>
</dbReference>
<dbReference type="PRINTS" id="PR00329">
    <property type="entry name" value="HEMAGGLUTN12"/>
</dbReference>
<dbReference type="SUPFAM" id="SSF58064">
    <property type="entry name" value="Influenza hemagglutinin (stalk)"/>
    <property type="match status" value="1"/>
</dbReference>
<dbReference type="SUPFAM" id="SSF49818">
    <property type="entry name" value="Viral protein domain"/>
    <property type="match status" value="1"/>
</dbReference>
<name>HEMA_I35A3</name>
<feature type="signal peptide" evidence="2">
    <location>
        <begin position="1"/>
        <end position="17"/>
    </location>
</feature>
<feature type="chain" id="PRO_0000440378" description="Hemagglutinin" evidence="2">
    <location>
        <begin position="18"/>
        <end position="566"/>
    </location>
</feature>
<feature type="chain" id="PRO_0000372873" description="Hemagglutinin HA1 chain" evidence="2">
    <location>
        <begin position="18"/>
        <end position="343"/>
    </location>
</feature>
<feature type="chain" id="PRO_0000372874" description="Hemagglutinin HA2 chain" evidence="2">
    <location>
        <begin position="345"/>
        <end position="566"/>
    </location>
</feature>
<feature type="topological domain" description="Extracellular" evidence="2">
    <location>
        <begin position="18"/>
        <end position="529"/>
    </location>
</feature>
<feature type="transmembrane region" description="Helical" evidence="2">
    <location>
        <begin position="530"/>
        <end position="550"/>
    </location>
</feature>
<feature type="topological domain" description="Cytoplasmic" evidence="2">
    <location>
        <begin position="551"/>
        <end position="566"/>
    </location>
</feature>
<feature type="site" description="Cleavage; by host" evidence="2">
    <location>
        <begin position="344"/>
        <end position="345"/>
    </location>
</feature>
<feature type="lipid moiety-binding region" description="S-palmitoyl cysteine; by host" evidence="2">
    <location>
        <position position="555"/>
    </location>
</feature>
<feature type="lipid moiety-binding region" description="S-palmitoyl cysteine; by host" evidence="2">
    <location>
        <position position="562"/>
    </location>
</feature>
<feature type="lipid moiety-binding region" description="S-palmitoyl cysteine; by host" evidence="2">
    <location>
        <position position="565"/>
    </location>
</feature>
<feature type="glycosylation site" description="N-linked (GlcNAc...) asparagine; by host" evidence="2">
    <location>
        <position position="27"/>
    </location>
</feature>
<feature type="glycosylation site" description="N-linked (GlcNAc...) asparagine; by host" evidence="2">
    <location>
        <position position="28"/>
    </location>
</feature>
<feature type="glycosylation site" description="N-linked (GlcNAc...) asparagine; by host" evidence="2">
    <location>
        <position position="40"/>
    </location>
</feature>
<feature type="glycosylation site" description="N-linked (GlcNAc...) asparagine; by host" evidence="2">
    <location>
        <position position="144"/>
    </location>
</feature>
<feature type="glycosylation site" description="N-linked (GlcNAc...) asparagine; by host" evidence="2">
    <location>
        <position position="286"/>
    </location>
</feature>
<feature type="glycosylation site" description="N-linked (GlcNAc...) asparagine; by host" evidence="2">
    <location>
        <position position="304"/>
    </location>
</feature>
<feature type="glycosylation site" description="N-linked (GlcNAc...) asparagine; by host" evidence="2">
    <location>
        <position position="498"/>
    </location>
</feature>
<feature type="disulfide bond" description="Interchain (between HA1 and HA2 chains)" evidence="2">
    <location>
        <begin position="21"/>
        <end position="481"/>
    </location>
</feature>
<feature type="disulfide bond" evidence="2">
    <location>
        <begin position="59"/>
        <end position="292"/>
    </location>
</feature>
<feature type="disulfide bond" evidence="2">
    <location>
        <begin position="72"/>
        <end position="84"/>
    </location>
</feature>
<feature type="disulfide bond" evidence="2">
    <location>
        <begin position="107"/>
        <end position="153"/>
    </location>
</feature>
<feature type="disulfide bond" evidence="2">
    <location>
        <begin position="296"/>
        <end position="320"/>
    </location>
</feature>
<feature type="disulfide bond" evidence="2">
    <location>
        <begin position="488"/>
        <end position="492"/>
    </location>
</feature>
<protein>
    <recommendedName>
        <fullName evidence="2">Hemagglutinin</fullName>
    </recommendedName>
    <component>
        <recommendedName>
            <fullName evidence="2">Hemagglutinin HA1 chain</fullName>
        </recommendedName>
    </component>
    <component>
        <recommendedName>
            <fullName evidence="2">Hemagglutinin HA2 chain</fullName>
        </recommendedName>
    </component>
</protein>
<gene>
    <name evidence="2" type="primary">HA</name>
</gene>
<organismHost>
    <name type="scientific">Aves</name>
    <dbReference type="NCBI Taxonomy" id="8782"/>
</organismHost>
<organismHost>
    <name type="scientific">Homo sapiens</name>
    <name type="common">Human</name>
    <dbReference type="NCBI Taxonomy" id="9606"/>
</organismHost>
<organismHost>
    <name type="scientific">Sus scrofa</name>
    <name type="common">Pig</name>
    <dbReference type="NCBI Taxonomy" id="9823"/>
</organismHost>
<sequence length="566" mass="63435">MKARLLVLLCALAAADADTICIGYHANNSTDTVDTVLEKNVTVTHSVNLLEDSHNGKLCRLKGIPPLQLGKCNIAGWLLGNPECDSLLPARSWSYIVETPNSENGACYPGDFINYEELREQLSSVSSFERFEIFPKESSWPKHNTTKGVTAACSHAGKSSFYRNLLWLTKKEDSYPKLKNSYVNKKGKEVLVLWGVHHPSSSKEQQTLYQNENAYVSVVSSNYNRRFTPEIAERPKVRDQTGRMNYYWTLLEPGDTIIFEANGNLIAPWYAFALSRGFGSGIITSNASMHECNTKCQTPQGAINSSLPFQNIHPVTIGECPKYVRSAKLRMVTGLRNIPSIQSRGLFGAIAGFIEGGWTGMIDGWYGYHHQNEQGSGYAADQKSTQNAINGITNKVNSVIEKMNTQFTAVGKEFNNLEKRMENLNKKVDDGFLDIWTYNAELLVLLENERTLDFHDSNVKNLYEKVKSQLKNNAKEIGNGCFEFYHKCDNECMESVRNGTYDYPKYSEESKLNREKIDGVKLESMGVYQILAIYSTVASSLVLLVSLGAISFWMCSNGSLQCRICI</sequence>
<comment type="function">
    <text evidence="2">Binds to sialic acid-containing receptors on the cell surface, bringing about the attachment of the virus particle to the cell. This attachment induces virion internalization either through clathrin-dependent endocytosis or through clathrin- and caveolin-independent pathway. Plays a major role in the determination of host range restriction and virulence. Class I viral fusion protein. Responsible for penetration of the virus into the cell cytoplasm by mediating the fusion of the membrane of the endocytosed virus particle with the endosomal membrane. Low pH in endosomes induces an irreversible conformational change in HA2, releasing the fusion hydrophobic peptide. Several trimers are required to form a competent fusion pore.</text>
</comment>
<comment type="subunit">
    <text evidence="1">Homotrimer of disulfide-linked HA1-HA2. Interacts with human CACNA1C.</text>
</comment>
<comment type="subcellular location">
    <subcellularLocation>
        <location evidence="2">Virion membrane</location>
        <topology evidence="2">Single-pass type I membrane protein</topology>
    </subcellularLocation>
    <subcellularLocation>
        <location evidence="2">Host apical cell membrane</location>
        <topology evidence="2">Single-pass type I membrane protein</topology>
    </subcellularLocation>
    <text evidence="2">Targeted to the apical plasma membrane in epithelial polarized cells through a signal present in the transmembrane domain. Associated with glycosphingolipid- and cholesterol-enriched detergent-resistant lipid rafts.</text>
</comment>
<comment type="PTM">
    <text evidence="2">Palmitoylated.</text>
</comment>
<comment type="PTM">
    <text evidence="2">In natural infection, inactive HA is matured into HA1 and HA2 outside the cell by one or more trypsin-like, arginine-specific endoprotease secreted by the bronchial epithelial cells. One identified protease that may be involved in this process is secreted in lungs by club cells.</text>
</comment>
<comment type="miscellaneous">
    <text>Major glycoprotein, comprises over 80% of the envelope proteins present in virus particle.</text>
</comment>
<comment type="miscellaneous">
    <text>The extent of infection into host organism is determined by HA. Influenza viruses bud from the apical surface of polarized epithelial cells (e.g. bronchial epithelial cells) into lumen of lungs and are therefore usually pneumotropic. The reason is that HA is cleaved by tryptase clara which is restricted to lungs. However, HAs of H5 and H7 pantropic avian viruses subtypes can be cleaved by furin and subtilisin-type enzymes, allowing the virus to grow in other organs than lungs.</text>
</comment>
<comment type="miscellaneous">
    <text evidence="3">The influenza A genome consist of 8 RNA segments. Genetic variation of hemagglutinin and/or neuraminidase genes results in the emergence of new influenza strains. The mechanism of variation can be the result of point mutations or the result of genetic reassortment between segments of two different strains.</text>
</comment>
<comment type="similarity">
    <text evidence="2">Belongs to the influenza viruses hemagglutinin family.</text>
</comment>
<keyword id="KW-1167">Clathrin- and caveolin-independent endocytosis of virus by host</keyword>
<keyword id="KW-1165">Clathrin-mediated endocytosis of virus by host</keyword>
<keyword id="KW-1015">Disulfide bond</keyword>
<keyword id="KW-1170">Fusion of virus membrane with host endosomal membrane</keyword>
<keyword id="KW-1168">Fusion of virus membrane with host membrane</keyword>
<keyword id="KW-0325">Glycoprotein</keyword>
<keyword id="KW-0348">Hemagglutinin</keyword>
<keyword id="KW-1032">Host cell membrane</keyword>
<keyword id="KW-1043">Host membrane</keyword>
<keyword id="KW-0945">Host-virus interaction</keyword>
<keyword id="KW-0449">Lipoprotein</keyword>
<keyword id="KW-0472">Membrane</keyword>
<keyword id="KW-0564">Palmitate</keyword>
<keyword id="KW-0732">Signal</keyword>
<keyword id="KW-0812">Transmembrane</keyword>
<keyword id="KW-1133">Transmembrane helix</keyword>
<keyword id="KW-1161">Viral attachment to host cell</keyword>
<keyword id="KW-0261">Viral envelope protein</keyword>
<keyword id="KW-1162">Viral penetration into host cytoplasm</keyword>
<keyword id="KW-0946">Virion</keyword>
<keyword id="KW-1164">Virus endocytosis by host</keyword>
<keyword id="KW-1160">Virus entry into host cell</keyword>
<accession>A4GCL9</accession>
<organism>
    <name type="scientific">Influenza A virus (strain A/USA:Phila/1935 H1N1)</name>
    <dbReference type="NCBI Taxonomy" id="425570"/>
    <lineage>
        <taxon>Viruses</taxon>
        <taxon>Riboviria</taxon>
        <taxon>Orthornavirae</taxon>
        <taxon>Negarnaviricota</taxon>
        <taxon>Polyploviricotina</taxon>
        <taxon>Insthoviricetes</taxon>
        <taxon>Articulavirales</taxon>
        <taxon>Orthomyxoviridae</taxon>
        <taxon>Alphainfluenzavirus</taxon>
        <taxon>Alphainfluenzavirus influenzae</taxon>
        <taxon>Influenza A virus</taxon>
    </lineage>
</organism>
<evidence type="ECO:0000250" key="1">
    <source>
        <dbReference type="UniProtKB" id="Q289M7"/>
    </source>
</evidence>
<evidence type="ECO:0000255" key="2">
    <source>
        <dbReference type="HAMAP-Rule" id="MF_04072"/>
    </source>
</evidence>
<evidence type="ECO:0000305" key="3"/>